<dbReference type="EMBL" id="FN356233">
    <property type="protein sequence ID" value="CAX83745.1"/>
    <property type="molecule type" value="mRNA"/>
</dbReference>
<dbReference type="EMBL" id="AB013396">
    <property type="protein sequence ID" value="BAB08858.1"/>
    <property type="status" value="ALT_SEQ"/>
    <property type="molecule type" value="Genomic_DNA"/>
</dbReference>
<dbReference type="EMBL" id="CP002688">
    <property type="protein sequence ID" value="AED96966.2"/>
    <property type="molecule type" value="Genomic_DNA"/>
</dbReference>
<dbReference type="RefSeq" id="NP_001318822.1">
    <property type="nucleotide sequence ID" value="NM_001345277.1"/>
</dbReference>
<dbReference type="SMR" id="F4KDF5"/>
<dbReference type="FunCoup" id="F4KDF5">
    <property type="interactions" value="472"/>
</dbReference>
<dbReference type="STRING" id="3702.F4KDF5"/>
<dbReference type="iPTMnet" id="F4KDF5"/>
<dbReference type="PaxDb" id="3702-AT5G57880.1"/>
<dbReference type="ProteomicsDB" id="238904"/>
<dbReference type="EnsemblPlants" id="AT5G57880.1">
    <property type="protein sequence ID" value="AT5G57880.1"/>
    <property type="gene ID" value="AT5G57880"/>
</dbReference>
<dbReference type="GeneID" id="835898"/>
<dbReference type="Gramene" id="AT5G57880.1">
    <property type="protein sequence ID" value="AT5G57880.1"/>
    <property type="gene ID" value="AT5G57880"/>
</dbReference>
<dbReference type="KEGG" id="ath:AT5G57880"/>
<dbReference type="Araport" id="AT5G57880"/>
<dbReference type="TAIR" id="AT5G57880">
    <property type="gene designation" value="MPS1"/>
</dbReference>
<dbReference type="eggNOG" id="ENOG502QVCM">
    <property type="taxonomic scope" value="Eukaryota"/>
</dbReference>
<dbReference type="HOGENOM" id="CLU_044141_0_0_1"/>
<dbReference type="InParanoid" id="F4KDF5"/>
<dbReference type="OMA" id="SNMFIMI"/>
<dbReference type="OrthoDB" id="1913471at2759"/>
<dbReference type="PRO" id="PR:F4KDF5"/>
<dbReference type="Proteomes" id="UP000006548">
    <property type="component" value="Chromosome 5"/>
</dbReference>
<dbReference type="ExpressionAtlas" id="F4KDF5">
    <property type="expression patterns" value="baseline and differential"/>
</dbReference>
<dbReference type="GO" id="GO:0005737">
    <property type="term" value="C:cytoplasm"/>
    <property type="evidence" value="ECO:0007669"/>
    <property type="project" value="UniProtKB-KW"/>
</dbReference>
<dbReference type="GO" id="GO:0005634">
    <property type="term" value="C:nucleus"/>
    <property type="evidence" value="ECO:0007669"/>
    <property type="project" value="UniProtKB-SubCell"/>
</dbReference>
<dbReference type="GO" id="GO:0005819">
    <property type="term" value="C:spindle"/>
    <property type="evidence" value="ECO:0007669"/>
    <property type="project" value="UniProtKB-SubCell"/>
</dbReference>
<dbReference type="GO" id="GO:0051026">
    <property type="term" value="P:chiasma assembly"/>
    <property type="evidence" value="ECO:0000315"/>
    <property type="project" value="TAIR"/>
</dbReference>
<dbReference type="GO" id="GO:0007059">
    <property type="term" value="P:chromosome segregation"/>
    <property type="evidence" value="ECO:0000315"/>
    <property type="project" value="TAIR"/>
</dbReference>
<dbReference type="GO" id="GO:0009553">
    <property type="term" value="P:embryo sac development"/>
    <property type="evidence" value="ECO:0000315"/>
    <property type="project" value="TAIR"/>
</dbReference>
<dbReference type="GO" id="GO:0007140">
    <property type="term" value="P:male meiotic nuclear division"/>
    <property type="evidence" value="ECO:0000315"/>
    <property type="project" value="TAIR"/>
</dbReference>
<dbReference type="GO" id="GO:0042138">
    <property type="term" value="P:meiotic DNA double-strand break formation"/>
    <property type="evidence" value="ECO:0000315"/>
    <property type="project" value="TAIR"/>
</dbReference>
<dbReference type="GO" id="GO:0000212">
    <property type="term" value="P:meiotic spindle organization"/>
    <property type="evidence" value="ECO:0000315"/>
    <property type="project" value="TAIR"/>
</dbReference>
<dbReference type="GO" id="GO:0048236">
    <property type="term" value="P:plant-type sporogenesis"/>
    <property type="evidence" value="ECO:0000315"/>
    <property type="project" value="TAIR"/>
</dbReference>
<dbReference type="GO" id="GO:0009555">
    <property type="term" value="P:pollen development"/>
    <property type="evidence" value="ECO:0000315"/>
    <property type="project" value="TAIR"/>
</dbReference>
<dbReference type="InterPro" id="IPR037500">
    <property type="entry name" value="Msp1"/>
</dbReference>
<dbReference type="PANTHER" id="PTHR35768">
    <property type="entry name" value="PROTEIN MULTIPOLAR SPINDLE 1"/>
    <property type="match status" value="1"/>
</dbReference>
<dbReference type="PANTHER" id="PTHR35768:SF1">
    <property type="entry name" value="PROTEIN MULTIPOLAR SPINDLE 1"/>
    <property type="match status" value="1"/>
</dbReference>
<sequence>MSSSVAEANHTEKEESLRLAIAVSLLRSKFQNHQSSSSTSRCYVSSESDALRWKQKAKERKKEIIRLQEDLKDAESSFHRDLFPANASCKCYFFDNLGVFSGRRIGEASESRFNDVLRRRFLRLARRRSRRKLTRSSQRLQPSEPDYEEEAEHLRISIDFLLELSEADSNDSNFSNWSHQAVDFIFASLKKLISMGRNLESVEESISFMITQLITRMCTPVKGNEVKQLETSVGFYVQHLIRKLGSEPFIGQRAIFAISQRISILAENLLFMDPFDESFPEMDECMFILIQLIEFLICDYLLPWANEAFDNVMFEEWIASVVHARKAVKALEERNGLYLLYMDRVTGELAKRVGQITSFREVEPAILDKILAYQEIE</sequence>
<proteinExistence type="evidence at transcript level"/>
<feature type="chain" id="PRO_0000438412" description="Protein MULTIPOLAR SPINDLE 1" evidence="1">
    <location>
        <begin position="1"/>
        <end position="377"/>
    </location>
</feature>
<feature type="short sequence motif" description="Nuclear localization signal" evidence="2">
    <location>
        <begin position="117"/>
        <end position="124"/>
    </location>
</feature>
<feature type="sequence conflict" description="In Ref. 1; CAX83745." evidence="7" ref="1">
    <original>Q</original>
    <variation>H</variation>
    <location>
        <position position="31"/>
    </location>
</feature>
<feature type="sequence conflict" description="In Ref. 1; CAX83745." evidence="7" ref="1">
    <original>V</original>
    <variation>F</variation>
    <location>
        <position position="221"/>
    </location>
</feature>
<feature type="sequence conflict" description="In Ref. 1; CAX83745." evidence="7" ref="1">
    <original>A</original>
    <variation>AE</variation>
    <location>
        <position position="305"/>
    </location>
</feature>
<keyword id="KW-0963">Cytoplasm</keyword>
<keyword id="KW-0206">Cytoskeleton</keyword>
<keyword id="KW-0217">Developmental protein</keyword>
<keyword id="KW-0233">DNA recombination</keyword>
<keyword id="KW-0469">Meiosis</keyword>
<keyword id="KW-0539">Nucleus</keyword>
<keyword id="KW-1185">Reference proteome</keyword>
<name>MUPS1_ARATH</name>
<gene>
    <name evidence="5" type="primary">MPS1</name>
    <name evidence="6" type="synonym">PRD2</name>
    <name evidence="9" type="ordered locus">At5g57880</name>
</gene>
<reference key="1">
    <citation type="journal article" date="2009" name="PLoS Genet.">
        <title>A high throughput genetic screen identifies new early meiotic recombination functions in Arabidopsis thaliana.</title>
        <authorList>
            <person name="De Muyt A."/>
            <person name="Pereira L."/>
            <person name="Vezon D."/>
            <person name="Chelysheva L."/>
            <person name="Gendrot G."/>
            <person name="Chambon A."/>
            <person name="Laine-Choinard S."/>
            <person name="Pelletier G."/>
            <person name="Mercier R."/>
            <person name="Nogue F."/>
            <person name="Grelon M."/>
        </authorList>
    </citation>
    <scope>NUCLEOTIDE SEQUENCE [MRNA]</scope>
    <scope>FUNCTION</scope>
    <scope>DISRUPTION PHENOTYPE</scope>
    <source>
        <strain>cv. Columbia</strain>
        <strain>cv. Wassilewskija</strain>
        <tissue>Flower bud</tissue>
    </source>
</reference>
<reference key="2">
    <citation type="journal article" date="1998" name="DNA Res.">
        <title>Structural analysis of Arabidopsis thaliana chromosome 5. VI. Sequence features of the regions of 1,367,185 bp covered by 19 physically assigned P1 and TAC clones.</title>
        <authorList>
            <person name="Kotani H."/>
            <person name="Nakamura Y."/>
            <person name="Sato S."/>
            <person name="Asamizu E."/>
            <person name="Kaneko T."/>
            <person name="Miyajima N."/>
            <person name="Tabata S."/>
        </authorList>
    </citation>
    <scope>NUCLEOTIDE SEQUENCE [LARGE SCALE GENOMIC DNA]</scope>
    <source>
        <strain>cv. Columbia</strain>
    </source>
</reference>
<reference key="3">
    <citation type="journal article" date="2017" name="Plant J.">
        <title>Araport11: a complete reannotation of the Arabidopsis thaliana reference genome.</title>
        <authorList>
            <person name="Cheng C.Y."/>
            <person name="Krishnakumar V."/>
            <person name="Chan A.P."/>
            <person name="Thibaud-Nissen F."/>
            <person name="Schobel S."/>
            <person name="Town C.D."/>
        </authorList>
    </citation>
    <scope>GENOME REANNOTATION</scope>
    <source>
        <strain>cv. Columbia</strain>
    </source>
</reference>
<reference key="4">
    <citation type="journal article" date="2009" name="Plant J.">
        <title>MULTIPOLAR SPINDLE 1 (MPS1), a novel coiled-coil protein of Arabidopsis thaliana, is required for meiotic spindle organization.</title>
        <authorList>
            <person name="Jiang H."/>
            <person name="Wang F.-F."/>
            <person name="Wu Y.-T."/>
            <person name="Zhou X."/>
            <person name="Huang X.-Y."/>
            <person name="Zhu J."/>
            <person name="Gao J.-F."/>
            <person name="Dong R.-B."/>
            <person name="Cao K.-M."/>
            <person name="Yang Z.-N."/>
        </authorList>
    </citation>
    <scope>FUNCTION</scope>
    <scope>DISRUPTION PHENOTYPE</scope>
    <scope>TISSUE SPECIFICITY</scope>
    <scope>DEVELOPMENTAL STAGE</scope>
    <source>
        <strain>cv. Columbia</strain>
    </source>
</reference>
<protein>
    <recommendedName>
        <fullName evidence="5">Protein MULTIPOLAR SPINDLE 1</fullName>
    </recommendedName>
    <alternativeName>
        <fullName evidence="6">Protein PUTATIVE RECOMBINATION INITIATION DEFECTS 2</fullName>
        <shortName evidence="6">AtPRD2</shortName>
    </alternativeName>
</protein>
<evidence type="ECO:0000255" key="1"/>
<evidence type="ECO:0000255" key="2">
    <source>
        <dbReference type="PROSITE-ProRule" id="PRU00768"/>
    </source>
</evidence>
<evidence type="ECO:0000269" key="3">
    <source>
    </source>
</evidence>
<evidence type="ECO:0000269" key="4">
    <source>
    </source>
</evidence>
<evidence type="ECO:0000303" key="5">
    <source>
    </source>
</evidence>
<evidence type="ECO:0000303" key="6">
    <source>
    </source>
</evidence>
<evidence type="ECO:0000305" key="7"/>
<evidence type="ECO:0000305" key="8">
    <source>
    </source>
</evidence>
<evidence type="ECO:0000312" key="9">
    <source>
        <dbReference type="Araport" id="AT5G57880"/>
    </source>
</evidence>
<accession>F4KDF5</accession>
<accession>C9X3W2</accession>
<accession>Q9FJM6</accession>
<comment type="function">
    <text evidence="3 4">Involved in meiotic spindle organization in meiocytes thus regulating chromosome segregation (PubMed:19500302). Required for formation of meiotic DNA double-strand breaks (DSBs) during early recombination processes (PubMed:19763177).</text>
</comment>
<comment type="subcellular location">
    <subcellularLocation>
        <location evidence="2">Nucleus</location>
    </subcellularLocation>
    <subcellularLocation>
        <location evidence="8">Cytoplasm</location>
        <location evidence="8">Cytoskeleton</location>
        <location evidence="8">Spindle</location>
    </subcellularLocation>
</comment>
<comment type="tissue specificity">
    <text evidence="3">Expressed in roots, stems, leaves, inflorescences and seedlings. Strongly expressed in meiocytes.</text>
</comment>
<comment type="developmental stage">
    <text evidence="3">In anthers, predominantly detected in meiocytes and tapetal cells from stage 5 to early stage 7, with highest levels at stage 6, the time of male meiosis. In ovules, present in female meiocytes and embryo sacs.</text>
</comment>
<comment type="disruption phenotype">
    <text evidence="3 4">Defective in early recombination processes leading to the absence of meiotic DNA double-strand break (DSB) formation (PubMed:19763177). Reduced silique elongation associated with fertility defects involving both male and female gametophyte abortion due to aberrant meiotic products (PubMed:19500302, PubMed:19763177). Produced multiple uneven spores aborted in later stages during anther development, due to abnormal chromosome segregation and unequal bipolar or multipolar spindles in meiocytes (PubMed:19500302).</text>
</comment>
<comment type="sequence caution" evidence="7">
    <conflict type="erroneous gene model prediction">
        <sequence resource="EMBL-CDS" id="BAB08858"/>
    </conflict>
</comment>
<organism>
    <name type="scientific">Arabidopsis thaliana</name>
    <name type="common">Mouse-ear cress</name>
    <dbReference type="NCBI Taxonomy" id="3702"/>
    <lineage>
        <taxon>Eukaryota</taxon>
        <taxon>Viridiplantae</taxon>
        <taxon>Streptophyta</taxon>
        <taxon>Embryophyta</taxon>
        <taxon>Tracheophyta</taxon>
        <taxon>Spermatophyta</taxon>
        <taxon>Magnoliopsida</taxon>
        <taxon>eudicotyledons</taxon>
        <taxon>Gunneridae</taxon>
        <taxon>Pentapetalae</taxon>
        <taxon>rosids</taxon>
        <taxon>malvids</taxon>
        <taxon>Brassicales</taxon>
        <taxon>Brassicaceae</taxon>
        <taxon>Camelineae</taxon>
        <taxon>Arabidopsis</taxon>
    </lineage>
</organism>